<feature type="initiator methionine" description="Removed" evidence="2">
    <location>
        <position position="1"/>
    </location>
</feature>
<feature type="chain" id="PRO_0000285951" description="Protein archease">
    <location>
        <begin position="2"/>
        <end position="168"/>
    </location>
</feature>
<feature type="binding site" evidence="1">
    <location>
        <position position="39"/>
    </location>
    <ligand>
        <name>Ca(2+)</name>
        <dbReference type="ChEBI" id="CHEBI:29108"/>
    </ligand>
</feature>
<feature type="binding site" evidence="1">
    <location>
        <position position="167"/>
    </location>
    <ligand>
        <name>Ca(2+)</name>
        <dbReference type="ChEBI" id="CHEBI:29108"/>
    </ligand>
</feature>
<feature type="binding site" evidence="1">
    <location>
        <position position="168"/>
    </location>
    <ligand>
        <name>Ca(2+)</name>
        <dbReference type="ChEBI" id="CHEBI:29108"/>
    </ligand>
</feature>
<feature type="modified residue" description="N-acetylalanine" evidence="2">
    <location>
        <position position="2"/>
    </location>
</feature>
<feature type="splice variant" id="VSP_024927" description="In isoform 2." evidence="3">
    <original>GTEVKAI</original>
    <variation>QSRLLAQ</variation>
    <location>
        <begin position="140"/>
        <end position="146"/>
    </location>
</feature>
<feature type="splice variant" id="VSP_024928" description="In isoform 2." evidence="3">
    <location>
        <begin position="147"/>
        <end position="168"/>
    </location>
</feature>
<feature type="sequence conflict" description="In Ref. 4; AAH26442." evidence="4" ref="4">
    <original>M</original>
    <variation>S</variation>
    <location>
        <position position="1"/>
    </location>
</feature>
<evidence type="ECO:0000250" key="1"/>
<evidence type="ECO:0000250" key="2">
    <source>
        <dbReference type="UniProtKB" id="Q8IWT0"/>
    </source>
</evidence>
<evidence type="ECO:0000303" key="3">
    <source>
    </source>
</evidence>
<evidence type="ECO:0000305" key="4"/>
<proteinExistence type="evidence at protein level"/>
<comment type="function">
    <text evidence="1">Component of the tRNA-splicing ligase complex required to facilitate the enzymatic turnover of catalytic subunit RTCB. Together with DDX1, acts by facilitating the guanylylation of RTCB, a key intermediate step in tRNA ligation (By similarity).</text>
</comment>
<comment type="subunit">
    <text evidence="1">Component of the tRNA-splicing ligase complex.</text>
</comment>
<comment type="alternative products">
    <event type="alternative splicing"/>
    <isoform>
        <id>Q505B7-1</id>
        <name>1</name>
        <sequence type="displayed"/>
    </isoform>
    <isoform>
        <id>Q505B7-2</id>
        <name>2</name>
        <sequence type="described" ref="VSP_024927 VSP_024928"/>
    </isoform>
</comment>
<comment type="miscellaneous">
    <molecule>Isoform 2</molecule>
    <text evidence="4">May be produced at very low levels due to a premature stop codon in the mRNA, leading to nonsense-mediated mRNA decay.</text>
</comment>
<comment type="similarity">
    <text evidence="4">Belongs to the archease family.</text>
</comment>
<comment type="sequence caution" evidence="4">
    <conflict type="erroneous initiation">
        <sequence resource="EMBL-CDS" id="AAH26442"/>
    </conflict>
</comment>
<comment type="sequence caution" evidence="4">
    <conflict type="erroneous initiation">
        <sequence resource="EMBL-CDS" id="AAH94629"/>
    </conflict>
</comment>
<keyword id="KW-0007">Acetylation</keyword>
<keyword id="KW-0025">Alternative splicing</keyword>
<keyword id="KW-0106">Calcium</keyword>
<keyword id="KW-0479">Metal-binding</keyword>
<keyword id="KW-1185">Reference proteome</keyword>
<keyword id="KW-0819">tRNA processing</keyword>
<organism>
    <name type="scientific">Mus musculus</name>
    <name type="common">Mouse</name>
    <dbReference type="NCBI Taxonomy" id="10090"/>
    <lineage>
        <taxon>Eukaryota</taxon>
        <taxon>Metazoa</taxon>
        <taxon>Chordata</taxon>
        <taxon>Craniata</taxon>
        <taxon>Vertebrata</taxon>
        <taxon>Euteleostomi</taxon>
        <taxon>Mammalia</taxon>
        <taxon>Eutheria</taxon>
        <taxon>Euarchontoglires</taxon>
        <taxon>Glires</taxon>
        <taxon>Rodentia</taxon>
        <taxon>Myomorpha</taxon>
        <taxon>Muroidea</taxon>
        <taxon>Muridae</taxon>
        <taxon>Murinae</taxon>
        <taxon>Mus</taxon>
        <taxon>Mus</taxon>
    </lineage>
</organism>
<protein>
    <recommendedName>
        <fullName>Protein archease</fullName>
    </recommendedName>
    <alternativeName>
        <fullName>Protein ZBTB8OS</fullName>
    </alternativeName>
</protein>
<name>ARCH_MOUSE</name>
<gene>
    <name type="primary">Zbtb8os</name>
    <name type="synonym">Arch</name>
</gene>
<reference key="1">
    <citation type="submission" date="2001-12" db="EMBL/GenBank/DDBJ databases">
        <title>Structure, expression and sequence comparison of human and murine archease.</title>
        <authorList>
            <person name="Alliel P.M."/>
            <person name="Goudou D."/>
            <person name="Bitoun M."/>
            <person name="Langlois C."/>
            <person name="Rieger F."/>
            <person name="Seddiqi N."/>
            <person name="Perin J.P."/>
        </authorList>
    </citation>
    <scope>NUCLEOTIDE SEQUENCE [MRNA] (ISOFORM 1)</scope>
    <source>
        <strain>C3H/HeJ</strain>
    </source>
</reference>
<reference key="2">
    <citation type="journal article" date="2005" name="Science">
        <title>The transcriptional landscape of the mammalian genome.</title>
        <authorList>
            <person name="Carninci P."/>
            <person name="Kasukawa T."/>
            <person name="Katayama S."/>
            <person name="Gough J."/>
            <person name="Frith M.C."/>
            <person name="Maeda N."/>
            <person name="Oyama R."/>
            <person name="Ravasi T."/>
            <person name="Lenhard B."/>
            <person name="Wells C."/>
            <person name="Kodzius R."/>
            <person name="Shimokawa K."/>
            <person name="Bajic V.B."/>
            <person name="Brenner S.E."/>
            <person name="Batalov S."/>
            <person name="Forrest A.R."/>
            <person name="Zavolan M."/>
            <person name="Davis M.J."/>
            <person name="Wilming L.G."/>
            <person name="Aidinis V."/>
            <person name="Allen J.E."/>
            <person name="Ambesi-Impiombato A."/>
            <person name="Apweiler R."/>
            <person name="Aturaliya R.N."/>
            <person name="Bailey T.L."/>
            <person name="Bansal M."/>
            <person name="Baxter L."/>
            <person name="Beisel K.W."/>
            <person name="Bersano T."/>
            <person name="Bono H."/>
            <person name="Chalk A.M."/>
            <person name="Chiu K.P."/>
            <person name="Choudhary V."/>
            <person name="Christoffels A."/>
            <person name="Clutterbuck D.R."/>
            <person name="Crowe M.L."/>
            <person name="Dalla E."/>
            <person name="Dalrymple B.P."/>
            <person name="de Bono B."/>
            <person name="Della Gatta G."/>
            <person name="di Bernardo D."/>
            <person name="Down T."/>
            <person name="Engstrom P."/>
            <person name="Fagiolini M."/>
            <person name="Faulkner G."/>
            <person name="Fletcher C.F."/>
            <person name="Fukushima T."/>
            <person name="Furuno M."/>
            <person name="Futaki S."/>
            <person name="Gariboldi M."/>
            <person name="Georgii-Hemming P."/>
            <person name="Gingeras T.R."/>
            <person name="Gojobori T."/>
            <person name="Green R.E."/>
            <person name="Gustincich S."/>
            <person name="Harbers M."/>
            <person name="Hayashi Y."/>
            <person name="Hensch T.K."/>
            <person name="Hirokawa N."/>
            <person name="Hill D."/>
            <person name="Huminiecki L."/>
            <person name="Iacono M."/>
            <person name="Ikeo K."/>
            <person name="Iwama A."/>
            <person name="Ishikawa T."/>
            <person name="Jakt M."/>
            <person name="Kanapin A."/>
            <person name="Katoh M."/>
            <person name="Kawasawa Y."/>
            <person name="Kelso J."/>
            <person name="Kitamura H."/>
            <person name="Kitano H."/>
            <person name="Kollias G."/>
            <person name="Krishnan S.P."/>
            <person name="Kruger A."/>
            <person name="Kummerfeld S.K."/>
            <person name="Kurochkin I.V."/>
            <person name="Lareau L.F."/>
            <person name="Lazarevic D."/>
            <person name="Lipovich L."/>
            <person name="Liu J."/>
            <person name="Liuni S."/>
            <person name="McWilliam S."/>
            <person name="Madan Babu M."/>
            <person name="Madera M."/>
            <person name="Marchionni L."/>
            <person name="Matsuda H."/>
            <person name="Matsuzawa S."/>
            <person name="Miki H."/>
            <person name="Mignone F."/>
            <person name="Miyake S."/>
            <person name="Morris K."/>
            <person name="Mottagui-Tabar S."/>
            <person name="Mulder N."/>
            <person name="Nakano N."/>
            <person name="Nakauchi H."/>
            <person name="Ng P."/>
            <person name="Nilsson R."/>
            <person name="Nishiguchi S."/>
            <person name="Nishikawa S."/>
            <person name="Nori F."/>
            <person name="Ohara O."/>
            <person name="Okazaki Y."/>
            <person name="Orlando V."/>
            <person name="Pang K.C."/>
            <person name="Pavan W.J."/>
            <person name="Pavesi G."/>
            <person name="Pesole G."/>
            <person name="Petrovsky N."/>
            <person name="Piazza S."/>
            <person name="Reed J."/>
            <person name="Reid J.F."/>
            <person name="Ring B.Z."/>
            <person name="Ringwald M."/>
            <person name="Rost B."/>
            <person name="Ruan Y."/>
            <person name="Salzberg S.L."/>
            <person name="Sandelin A."/>
            <person name="Schneider C."/>
            <person name="Schoenbach C."/>
            <person name="Sekiguchi K."/>
            <person name="Semple C.A."/>
            <person name="Seno S."/>
            <person name="Sessa L."/>
            <person name="Sheng Y."/>
            <person name="Shibata Y."/>
            <person name="Shimada H."/>
            <person name="Shimada K."/>
            <person name="Silva D."/>
            <person name="Sinclair B."/>
            <person name="Sperling S."/>
            <person name="Stupka E."/>
            <person name="Sugiura K."/>
            <person name="Sultana R."/>
            <person name="Takenaka Y."/>
            <person name="Taki K."/>
            <person name="Tammoja K."/>
            <person name="Tan S.L."/>
            <person name="Tang S."/>
            <person name="Taylor M.S."/>
            <person name="Tegner J."/>
            <person name="Teichmann S.A."/>
            <person name="Ueda H.R."/>
            <person name="van Nimwegen E."/>
            <person name="Verardo R."/>
            <person name="Wei C.L."/>
            <person name="Yagi K."/>
            <person name="Yamanishi H."/>
            <person name="Zabarovsky E."/>
            <person name="Zhu S."/>
            <person name="Zimmer A."/>
            <person name="Hide W."/>
            <person name="Bult C."/>
            <person name="Grimmond S.M."/>
            <person name="Teasdale R.D."/>
            <person name="Liu E.T."/>
            <person name="Brusic V."/>
            <person name="Quackenbush J."/>
            <person name="Wahlestedt C."/>
            <person name="Mattick J.S."/>
            <person name="Hume D.A."/>
            <person name="Kai C."/>
            <person name="Sasaki D."/>
            <person name="Tomaru Y."/>
            <person name="Fukuda S."/>
            <person name="Kanamori-Katayama M."/>
            <person name="Suzuki M."/>
            <person name="Aoki J."/>
            <person name="Arakawa T."/>
            <person name="Iida J."/>
            <person name="Imamura K."/>
            <person name="Itoh M."/>
            <person name="Kato T."/>
            <person name="Kawaji H."/>
            <person name="Kawagashira N."/>
            <person name="Kawashima T."/>
            <person name="Kojima M."/>
            <person name="Kondo S."/>
            <person name="Konno H."/>
            <person name="Nakano K."/>
            <person name="Ninomiya N."/>
            <person name="Nishio T."/>
            <person name="Okada M."/>
            <person name="Plessy C."/>
            <person name="Shibata K."/>
            <person name="Shiraki T."/>
            <person name="Suzuki S."/>
            <person name="Tagami M."/>
            <person name="Waki K."/>
            <person name="Watahiki A."/>
            <person name="Okamura-Oho Y."/>
            <person name="Suzuki H."/>
            <person name="Kawai J."/>
            <person name="Hayashizaki Y."/>
        </authorList>
    </citation>
    <scope>NUCLEOTIDE SEQUENCE [LARGE SCALE MRNA] (ISOFORMS 1 AND 2)</scope>
    <source>
        <strain>C57BL/6J</strain>
        <tissue>Pancreas</tissue>
        <tissue>Placenta</tissue>
        <tissue>Small intestine</tissue>
        <tissue>Tongue</tissue>
    </source>
</reference>
<reference key="3">
    <citation type="journal article" date="2009" name="PLoS Biol.">
        <title>Lineage-specific biology revealed by a finished genome assembly of the mouse.</title>
        <authorList>
            <person name="Church D.M."/>
            <person name="Goodstadt L."/>
            <person name="Hillier L.W."/>
            <person name="Zody M.C."/>
            <person name="Goldstein S."/>
            <person name="She X."/>
            <person name="Bult C.J."/>
            <person name="Agarwala R."/>
            <person name="Cherry J.L."/>
            <person name="DiCuccio M."/>
            <person name="Hlavina W."/>
            <person name="Kapustin Y."/>
            <person name="Meric P."/>
            <person name="Maglott D."/>
            <person name="Birtle Z."/>
            <person name="Marques A.C."/>
            <person name="Graves T."/>
            <person name="Zhou S."/>
            <person name="Teague B."/>
            <person name="Potamousis K."/>
            <person name="Churas C."/>
            <person name="Place M."/>
            <person name="Herschleb J."/>
            <person name="Runnheim R."/>
            <person name="Forrest D."/>
            <person name="Amos-Landgraf J."/>
            <person name="Schwartz D.C."/>
            <person name="Cheng Z."/>
            <person name="Lindblad-Toh K."/>
            <person name="Eichler E.E."/>
            <person name="Ponting C.P."/>
        </authorList>
    </citation>
    <scope>NUCLEOTIDE SEQUENCE [LARGE SCALE GENOMIC DNA]</scope>
    <source>
        <strain>C57BL/6J</strain>
    </source>
</reference>
<reference key="4">
    <citation type="journal article" date="2004" name="Genome Res.">
        <title>The status, quality, and expansion of the NIH full-length cDNA project: the Mammalian Gene Collection (MGC).</title>
        <authorList>
            <consortium name="The MGC Project Team"/>
        </authorList>
    </citation>
    <scope>NUCLEOTIDE SEQUENCE [LARGE SCALE MRNA] (ISOFORM 1)</scope>
    <source>
        <strain>C57BL/6J</strain>
        <strain>FVB/N</strain>
        <tissue>Brain</tissue>
        <tissue>Kidney</tissue>
        <tissue>Thymus</tissue>
    </source>
</reference>
<reference key="5">
    <citation type="journal article" date="2004" name="Proteins">
        <title>Predicted role for the archease protein family based on structural and sequence analysis of TM1083 and MTH1598, two proteins structurally characterized through structural genomics efforts.</title>
        <authorList>
            <person name="Canaves J.M."/>
        </authorList>
    </citation>
    <scope>IDENTIFICATION</scope>
</reference>
<reference key="6">
    <citation type="journal article" date="2010" name="Cell">
        <title>A tissue-specific atlas of mouse protein phosphorylation and expression.</title>
        <authorList>
            <person name="Huttlin E.L."/>
            <person name="Jedrychowski M.P."/>
            <person name="Elias J.E."/>
            <person name="Goswami T."/>
            <person name="Rad R."/>
            <person name="Beausoleil S.A."/>
            <person name="Villen J."/>
            <person name="Haas W."/>
            <person name="Sowa M.E."/>
            <person name="Gygi S.P."/>
        </authorList>
    </citation>
    <scope>IDENTIFICATION BY MASS SPECTROMETRY [LARGE SCALE ANALYSIS]</scope>
    <source>
        <tissue>Brain</tissue>
        <tissue>Brown adipose tissue</tissue>
        <tissue>Kidney</tissue>
        <tissue>Liver</tissue>
        <tissue>Pancreas</tissue>
        <tissue>Spleen</tissue>
        <tissue>Testis</tissue>
    </source>
</reference>
<accession>Q505B7</accession>
<accession>Q8R0S8</accession>
<accession>Q9CQ53</accession>
<accession>Q9D770</accession>
<sequence>MAQEEEDVRDYNLTEEQKATKDKYPPVNRKYEYLDHTADVQLHAWGDTLEEAFEQCAMAMFGYMTDTGTVEPLRTVEVETQGDDLQSLLFHFLDEWLYKFSADEYFIPREVKVLNIDQKNFKLRSIGWGEEFSLSKHPQGTEVKAITYSAMQVYNEEKPEVFFVIIDI</sequence>
<dbReference type="EMBL" id="AY071852">
    <property type="protein sequence ID" value="AAL58522.1"/>
    <property type="molecule type" value="mRNA"/>
</dbReference>
<dbReference type="EMBL" id="AK007377">
    <property type="protein sequence ID" value="BAB24996.1"/>
    <property type="molecule type" value="mRNA"/>
</dbReference>
<dbReference type="EMBL" id="AK008007">
    <property type="protein sequence ID" value="BAB25405.1"/>
    <property type="molecule type" value="mRNA"/>
</dbReference>
<dbReference type="EMBL" id="AK009527">
    <property type="protein sequence ID" value="BAB26341.1"/>
    <property type="molecule type" value="mRNA"/>
</dbReference>
<dbReference type="EMBL" id="AK132279">
    <property type="protein sequence ID" value="BAE21078.1"/>
    <property type="molecule type" value="mRNA"/>
</dbReference>
<dbReference type="EMBL" id="AL607123">
    <property type="status" value="NOT_ANNOTATED_CDS"/>
    <property type="molecule type" value="Genomic_DNA"/>
</dbReference>
<dbReference type="EMBL" id="BC026442">
    <property type="protein sequence ID" value="AAH26442.1"/>
    <property type="status" value="ALT_INIT"/>
    <property type="molecule type" value="mRNA"/>
</dbReference>
<dbReference type="EMBL" id="BC094629">
    <property type="protein sequence ID" value="AAH94629.1"/>
    <property type="status" value="ALT_INIT"/>
    <property type="molecule type" value="mRNA"/>
</dbReference>
<dbReference type="EMBL" id="BC125606">
    <property type="protein sequence ID" value="AAI25607.1"/>
    <property type="molecule type" value="mRNA"/>
</dbReference>
<dbReference type="EMBL" id="BC125608">
    <property type="protein sequence ID" value="AAI25609.1"/>
    <property type="molecule type" value="mRNA"/>
</dbReference>
<dbReference type="RefSeq" id="NP_080246.1">
    <property type="nucleotide sequence ID" value="NM_025970.3"/>
</dbReference>
<dbReference type="SMR" id="Q505B7"/>
<dbReference type="FunCoup" id="Q505B7">
    <property type="interactions" value="40"/>
</dbReference>
<dbReference type="STRING" id="10090.ENSMUSP00000120925"/>
<dbReference type="PhosphoSitePlus" id="Q505B7"/>
<dbReference type="jPOST" id="Q505B7"/>
<dbReference type="PaxDb" id="10090-ENSMUSP00000120925"/>
<dbReference type="PeptideAtlas" id="Q505B7"/>
<dbReference type="ProteomicsDB" id="283253">
    <molecule id="Q505B7-1"/>
</dbReference>
<dbReference type="ProteomicsDB" id="283254">
    <molecule id="Q505B7-2"/>
</dbReference>
<dbReference type="Pumba" id="Q505B7"/>
<dbReference type="Antibodypedia" id="54681">
    <property type="antibodies" value="48 antibodies from 14 providers"/>
</dbReference>
<dbReference type="DNASU" id="67106"/>
<dbReference type="Ensembl" id="ENSMUST00000146767.8">
    <molecule id="Q505B7-2"/>
    <property type="protein sequence ID" value="ENSMUSP00000114628.2"/>
    <property type="gene ID" value="ENSMUSG00000057572.16"/>
</dbReference>
<dbReference type="GeneID" id="67106"/>
<dbReference type="KEGG" id="mmu:67106"/>
<dbReference type="AGR" id="MGI:1914356"/>
<dbReference type="CTD" id="339487"/>
<dbReference type="MGI" id="MGI:1914356">
    <property type="gene designation" value="Zbtb8os"/>
</dbReference>
<dbReference type="VEuPathDB" id="HostDB:ENSMUSG00000057572"/>
<dbReference type="eggNOG" id="KOG4528">
    <property type="taxonomic scope" value="Eukaryota"/>
</dbReference>
<dbReference type="GeneTree" id="ENSGT00390000003245"/>
<dbReference type="InParanoid" id="Q505B7"/>
<dbReference type="OrthoDB" id="2190767at2759"/>
<dbReference type="PhylomeDB" id="Q505B7"/>
<dbReference type="BioGRID-ORCS" id="67106">
    <property type="hits" value="28 hits in 76 CRISPR screens"/>
</dbReference>
<dbReference type="ChiTaRS" id="Zbtb8os">
    <property type="organism name" value="mouse"/>
</dbReference>
<dbReference type="PRO" id="PR:Q505B7"/>
<dbReference type="Proteomes" id="UP000000589">
    <property type="component" value="Chromosome 4"/>
</dbReference>
<dbReference type="RNAct" id="Q505B7">
    <property type="molecule type" value="protein"/>
</dbReference>
<dbReference type="Bgee" id="ENSMUSG00000057572">
    <property type="expression patterns" value="Expressed in yolk sac and 80 other cell types or tissues"/>
</dbReference>
<dbReference type="ExpressionAtlas" id="Q505B7">
    <property type="expression patterns" value="baseline and differential"/>
</dbReference>
<dbReference type="GO" id="GO:0072669">
    <property type="term" value="C:tRNA-splicing ligase complex"/>
    <property type="evidence" value="ECO:0000250"/>
    <property type="project" value="UniProtKB"/>
</dbReference>
<dbReference type="GO" id="GO:0046872">
    <property type="term" value="F:metal ion binding"/>
    <property type="evidence" value="ECO:0007669"/>
    <property type="project" value="UniProtKB-KW"/>
</dbReference>
<dbReference type="GO" id="GO:0006388">
    <property type="term" value="P:tRNA splicing, via endonucleolytic cleavage and ligation"/>
    <property type="evidence" value="ECO:0000250"/>
    <property type="project" value="UniProtKB"/>
</dbReference>
<dbReference type="FunFam" id="3.55.10.10:FF:000001">
    <property type="entry name" value="protein archease isoform X1"/>
    <property type="match status" value="1"/>
</dbReference>
<dbReference type="Gene3D" id="3.55.10.10">
    <property type="entry name" value="Archease domain"/>
    <property type="match status" value="1"/>
</dbReference>
<dbReference type="InterPro" id="IPR002804">
    <property type="entry name" value="Archease"/>
</dbReference>
<dbReference type="InterPro" id="IPR023572">
    <property type="entry name" value="Archease_dom"/>
</dbReference>
<dbReference type="InterPro" id="IPR036820">
    <property type="entry name" value="Archease_dom_sf"/>
</dbReference>
<dbReference type="PANTHER" id="PTHR12682">
    <property type="entry name" value="ARCHEASE"/>
    <property type="match status" value="1"/>
</dbReference>
<dbReference type="PANTHER" id="PTHR12682:SF11">
    <property type="entry name" value="PROTEIN ARCHEASE"/>
    <property type="match status" value="1"/>
</dbReference>
<dbReference type="Pfam" id="PF01951">
    <property type="entry name" value="Archease"/>
    <property type="match status" value="1"/>
</dbReference>
<dbReference type="SUPFAM" id="SSF69819">
    <property type="entry name" value="MTH1598-like"/>
    <property type="match status" value="1"/>
</dbReference>